<feature type="chain" id="PRO_0000047490" description="Zinc finger protein 257">
    <location>
        <begin position="1"/>
        <end position="563"/>
    </location>
</feature>
<feature type="domain" description="KRAB" evidence="2">
    <location>
        <begin position="4"/>
        <end position="75"/>
    </location>
</feature>
<feature type="zinc finger region" description="C2H2-type 1" evidence="1">
    <location>
        <begin position="173"/>
        <end position="195"/>
    </location>
</feature>
<feature type="zinc finger region" description="C2H2-type 2" evidence="1">
    <location>
        <begin position="201"/>
        <end position="223"/>
    </location>
</feature>
<feature type="zinc finger region" description="C2H2-type 3" evidence="1">
    <location>
        <begin position="229"/>
        <end position="251"/>
    </location>
</feature>
<feature type="zinc finger region" description="C2H2-type 4" evidence="1">
    <location>
        <begin position="257"/>
        <end position="279"/>
    </location>
</feature>
<feature type="zinc finger region" description="C2H2-type 5; degenerate" evidence="1">
    <location>
        <begin position="285"/>
        <end position="310"/>
    </location>
</feature>
<feature type="zinc finger region" description="C2H2-type 6" evidence="1">
    <location>
        <begin position="316"/>
        <end position="338"/>
    </location>
</feature>
<feature type="zinc finger region" description="C2H2-type 7" evidence="1">
    <location>
        <begin position="344"/>
        <end position="366"/>
    </location>
</feature>
<feature type="zinc finger region" description="C2H2-type 8" evidence="1">
    <location>
        <begin position="372"/>
        <end position="394"/>
    </location>
</feature>
<feature type="zinc finger region" description="C2H2-type 9; degenerate" evidence="1">
    <location>
        <begin position="400"/>
        <end position="425"/>
    </location>
</feature>
<feature type="zinc finger region" description="C2H2-type 10" evidence="1">
    <location>
        <begin position="431"/>
        <end position="453"/>
    </location>
</feature>
<feature type="zinc finger region" description="C2H2-type 11" evidence="1">
    <location>
        <begin position="459"/>
        <end position="481"/>
    </location>
</feature>
<feature type="zinc finger region" description="C2H2-type 12" evidence="1">
    <location>
        <begin position="487"/>
        <end position="509"/>
    </location>
</feature>
<feature type="zinc finger region" description="C2H2-type 13" evidence="1">
    <location>
        <begin position="515"/>
        <end position="537"/>
    </location>
</feature>
<feature type="splice variant" id="VSP_040858" description="In isoform 3." evidence="5">
    <location>
        <begin position="1"/>
        <end position="32"/>
    </location>
</feature>
<feature type="splice variant" id="VSP_040859" description="In isoform 4." evidence="4">
    <location>
        <begin position="51"/>
        <end position="83"/>
    </location>
</feature>
<feature type="splice variant" id="VSP_040860" description="In isoform 2." evidence="3">
    <location>
        <begin position="177"/>
        <end position="204"/>
    </location>
</feature>
<feature type="sequence conflict" description="In Ref. 4; AAH36446." evidence="6" ref="4">
    <original>R</original>
    <variation>G</variation>
    <location>
        <position position="355"/>
    </location>
</feature>
<feature type="sequence conflict" description="In Ref. 1; AAD20957." evidence="6" ref="1">
    <original>K</original>
    <variation>E</variation>
    <location>
        <position position="450"/>
    </location>
</feature>
<feature type="sequence conflict" description="In Ref. 1; AAD20957." evidence="6" ref="1">
    <original>HL</original>
    <variation>QP</variation>
    <location>
        <begin position="501"/>
        <end position="502"/>
    </location>
</feature>
<feature type="sequence conflict" description="In Ref. 1; AAD20957." evidence="6" ref="1">
    <original>K</original>
    <variation>R</variation>
    <location>
        <position position="506"/>
    </location>
</feature>
<feature type="sequence conflict" description="In Ref. 1; AAD20957." evidence="6" ref="1">
    <original>P</original>
    <variation>A</variation>
    <location>
        <position position="523"/>
    </location>
</feature>
<feature type="sequence conflict" description="In Ref. 1; AAD20957." evidence="6" ref="1">
    <original>R</original>
    <variation>T</variation>
    <location>
        <position position="526"/>
    </location>
</feature>
<dbReference type="EMBL" id="AF070651">
    <property type="protein sequence ID" value="AAD20957.1"/>
    <property type="molecule type" value="mRNA"/>
</dbReference>
<dbReference type="EMBL" id="AK056694">
    <property type="protein sequence ID" value="BAG51786.1"/>
    <property type="molecule type" value="mRNA"/>
</dbReference>
<dbReference type="EMBL" id="AC003973">
    <property type="status" value="NOT_ANNOTATED_CDS"/>
    <property type="molecule type" value="Genomic_DNA"/>
</dbReference>
<dbReference type="EMBL" id="AC011482">
    <property type="status" value="NOT_ANNOTATED_CDS"/>
    <property type="molecule type" value="Genomic_DNA"/>
</dbReference>
<dbReference type="EMBL" id="BC036446">
    <property type="protein sequence ID" value="AAH36446.1"/>
    <property type="molecule type" value="mRNA"/>
</dbReference>
<dbReference type="CCDS" id="CCDS46030.1">
    <molecule id="Q9Y2Q1-1"/>
</dbReference>
<dbReference type="RefSeq" id="NP_001303925.1">
    <molecule id="Q9Y2Q1-3"/>
    <property type="nucleotide sequence ID" value="NM_001316996.2"/>
</dbReference>
<dbReference type="RefSeq" id="NP_001303926.1">
    <property type="nucleotide sequence ID" value="NM_001316997.1"/>
</dbReference>
<dbReference type="RefSeq" id="NP_001303927.1">
    <property type="nucleotide sequence ID" value="NM_001316998.1"/>
</dbReference>
<dbReference type="RefSeq" id="NP_258429.2">
    <molecule id="Q9Y2Q1-1"/>
    <property type="nucleotide sequence ID" value="NM_033468.4"/>
</dbReference>
<dbReference type="SMR" id="Q9Y2Q1"/>
<dbReference type="BioGRID" id="125264">
    <property type="interactions" value="4"/>
</dbReference>
<dbReference type="FunCoup" id="Q9Y2Q1">
    <property type="interactions" value="73"/>
</dbReference>
<dbReference type="IntAct" id="Q9Y2Q1">
    <property type="interactions" value="2"/>
</dbReference>
<dbReference type="MINT" id="Q9Y2Q1"/>
<dbReference type="STRING" id="9606.ENSP00000470209"/>
<dbReference type="iPTMnet" id="Q9Y2Q1"/>
<dbReference type="PhosphoSitePlus" id="Q9Y2Q1"/>
<dbReference type="BioMuta" id="ZNF257"/>
<dbReference type="DMDM" id="327478547"/>
<dbReference type="jPOST" id="Q9Y2Q1"/>
<dbReference type="MassIVE" id="Q9Y2Q1"/>
<dbReference type="PaxDb" id="9606-ENSP00000470209"/>
<dbReference type="PeptideAtlas" id="Q9Y2Q1"/>
<dbReference type="ProteomicsDB" id="85861">
    <molecule id="Q9Y2Q1-1"/>
</dbReference>
<dbReference type="ProteomicsDB" id="85862">
    <molecule id="Q9Y2Q1-2"/>
</dbReference>
<dbReference type="ProteomicsDB" id="85863">
    <molecule id="Q9Y2Q1-3"/>
</dbReference>
<dbReference type="ProteomicsDB" id="85864">
    <molecule id="Q9Y2Q1-4"/>
</dbReference>
<dbReference type="Antibodypedia" id="28717">
    <property type="antibodies" value="42 antibodies from 13 providers"/>
</dbReference>
<dbReference type="DNASU" id="113835"/>
<dbReference type="Ensembl" id="ENST00000594947.6">
    <molecule id="Q9Y2Q1-1"/>
    <property type="protein sequence ID" value="ENSP00000470209.1"/>
    <property type="gene ID" value="ENSG00000197134.13"/>
</dbReference>
<dbReference type="GeneID" id="113835"/>
<dbReference type="KEGG" id="hsa:113835"/>
<dbReference type="MANE-Select" id="ENST00000594947.6">
    <property type="protein sequence ID" value="ENSP00000470209.1"/>
    <property type="RefSeq nucleotide sequence ID" value="NM_033468.4"/>
    <property type="RefSeq protein sequence ID" value="NP_258429.2"/>
</dbReference>
<dbReference type="UCSC" id="uc010ecx.4">
    <molecule id="Q9Y2Q1-1"/>
    <property type="organism name" value="human"/>
</dbReference>
<dbReference type="AGR" id="HGNC:13498"/>
<dbReference type="CTD" id="113835"/>
<dbReference type="DisGeNET" id="113835"/>
<dbReference type="GeneCards" id="ZNF257"/>
<dbReference type="HGNC" id="HGNC:13498">
    <property type="gene designation" value="ZNF257"/>
</dbReference>
<dbReference type="HPA" id="ENSG00000197134">
    <property type="expression patterns" value="Low tissue specificity"/>
</dbReference>
<dbReference type="MIM" id="606957">
    <property type="type" value="gene"/>
</dbReference>
<dbReference type="neXtProt" id="NX_Q9Y2Q1"/>
<dbReference type="OpenTargets" id="ENSG00000197134"/>
<dbReference type="PharmGKB" id="PA37786"/>
<dbReference type="VEuPathDB" id="HostDB:ENSG00000197134"/>
<dbReference type="eggNOG" id="KOG1721">
    <property type="taxonomic scope" value="Eukaryota"/>
</dbReference>
<dbReference type="GeneTree" id="ENSGT01130000278311"/>
<dbReference type="HOGENOM" id="CLU_002678_44_5_1"/>
<dbReference type="InParanoid" id="Q9Y2Q1"/>
<dbReference type="OMA" id="KYDECCK"/>
<dbReference type="OrthoDB" id="9535228at2759"/>
<dbReference type="PAN-GO" id="Q9Y2Q1">
    <property type="GO annotations" value="3 GO annotations based on evolutionary models"/>
</dbReference>
<dbReference type="PhylomeDB" id="Q9Y2Q1"/>
<dbReference type="TreeFam" id="TF342117"/>
<dbReference type="PathwayCommons" id="Q9Y2Q1"/>
<dbReference type="Reactome" id="R-HSA-212436">
    <property type="pathway name" value="Generic Transcription Pathway"/>
</dbReference>
<dbReference type="Reactome" id="R-HSA-9843940">
    <property type="pathway name" value="Regulation of endogenous retroelements by KRAB-ZFP proteins"/>
</dbReference>
<dbReference type="SignaLink" id="Q9Y2Q1"/>
<dbReference type="BioGRID-ORCS" id="113835">
    <property type="hits" value="9 hits in 1137 CRISPR screens"/>
</dbReference>
<dbReference type="GenomeRNAi" id="113835"/>
<dbReference type="Pharos" id="Q9Y2Q1">
    <property type="development level" value="Tdark"/>
</dbReference>
<dbReference type="PRO" id="PR:Q9Y2Q1"/>
<dbReference type="Proteomes" id="UP000005640">
    <property type="component" value="Chromosome 19"/>
</dbReference>
<dbReference type="RNAct" id="Q9Y2Q1">
    <property type="molecule type" value="protein"/>
</dbReference>
<dbReference type="Bgee" id="ENSG00000197134">
    <property type="expression patterns" value="Expressed in primordial germ cell in gonad and 99 other cell types or tissues"/>
</dbReference>
<dbReference type="ExpressionAtlas" id="Q9Y2Q1">
    <property type="expression patterns" value="baseline and differential"/>
</dbReference>
<dbReference type="GO" id="GO:0005634">
    <property type="term" value="C:nucleus"/>
    <property type="evidence" value="ECO:0007669"/>
    <property type="project" value="UniProtKB-SubCell"/>
</dbReference>
<dbReference type="GO" id="GO:0000981">
    <property type="term" value="F:DNA-binding transcription factor activity, RNA polymerase II-specific"/>
    <property type="evidence" value="ECO:0000318"/>
    <property type="project" value="GO_Central"/>
</dbReference>
<dbReference type="GO" id="GO:0000978">
    <property type="term" value="F:RNA polymerase II cis-regulatory region sequence-specific DNA binding"/>
    <property type="evidence" value="ECO:0000318"/>
    <property type="project" value="GO_Central"/>
</dbReference>
<dbReference type="GO" id="GO:0008270">
    <property type="term" value="F:zinc ion binding"/>
    <property type="evidence" value="ECO:0007669"/>
    <property type="project" value="UniProtKB-KW"/>
</dbReference>
<dbReference type="GO" id="GO:0006355">
    <property type="term" value="P:regulation of DNA-templated transcription"/>
    <property type="evidence" value="ECO:0000318"/>
    <property type="project" value="GO_Central"/>
</dbReference>
<dbReference type="CDD" id="cd07765">
    <property type="entry name" value="KRAB_A-box"/>
    <property type="match status" value="1"/>
</dbReference>
<dbReference type="FunFam" id="3.30.160.60:FF:001737">
    <property type="entry name" value="Zinc finger protein 100"/>
    <property type="match status" value="1"/>
</dbReference>
<dbReference type="FunFam" id="3.30.160.60:FF:000005">
    <property type="entry name" value="Zinc finger protein 14 homolog"/>
    <property type="match status" value="1"/>
</dbReference>
<dbReference type="FunFam" id="3.30.160.60:FF:001868">
    <property type="entry name" value="Zinc finger protein 264"/>
    <property type="match status" value="1"/>
</dbReference>
<dbReference type="FunFam" id="3.30.160.60:FF:000120">
    <property type="entry name" value="Zinc finger protein 430"/>
    <property type="match status" value="8"/>
</dbReference>
<dbReference type="FunFam" id="3.30.160.60:FF:002448">
    <property type="entry name" value="Zinc finger protein 430"/>
    <property type="match status" value="1"/>
</dbReference>
<dbReference type="Gene3D" id="6.10.140.140">
    <property type="match status" value="1"/>
</dbReference>
<dbReference type="Gene3D" id="3.30.160.60">
    <property type="entry name" value="Classic Zinc Finger"/>
    <property type="match status" value="14"/>
</dbReference>
<dbReference type="InterPro" id="IPR050636">
    <property type="entry name" value="C2H2-ZF_domain-containing"/>
</dbReference>
<dbReference type="InterPro" id="IPR001909">
    <property type="entry name" value="KRAB"/>
</dbReference>
<dbReference type="InterPro" id="IPR036051">
    <property type="entry name" value="KRAB_dom_sf"/>
</dbReference>
<dbReference type="InterPro" id="IPR036236">
    <property type="entry name" value="Znf_C2H2_sf"/>
</dbReference>
<dbReference type="InterPro" id="IPR013087">
    <property type="entry name" value="Znf_C2H2_type"/>
</dbReference>
<dbReference type="PANTHER" id="PTHR47772:SF15">
    <property type="entry name" value="REDUCED EXPRESSION 2-RELATED"/>
    <property type="match status" value="1"/>
</dbReference>
<dbReference type="PANTHER" id="PTHR47772">
    <property type="entry name" value="ZINC FINGER PROTEIN 200"/>
    <property type="match status" value="1"/>
</dbReference>
<dbReference type="Pfam" id="PF01352">
    <property type="entry name" value="KRAB"/>
    <property type="match status" value="1"/>
</dbReference>
<dbReference type="Pfam" id="PF00096">
    <property type="entry name" value="zf-C2H2"/>
    <property type="match status" value="11"/>
</dbReference>
<dbReference type="SMART" id="SM00349">
    <property type="entry name" value="KRAB"/>
    <property type="match status" value="1"/>
</dbReference>
<dbReference type="SMART" id="SM00355">
    <property type="entry name" value="ZnF_C2H2"/>
    <property type="match status" value="13"/>
</dbReference>
<dbReference type="SUPFAM" id="SSF57667">
    <property type="entry name" value="beta-beta-alpha zinc fingers"/>
    <property type="match status" value="8"/>
</dbReference>
<dbReference type="SUPFAM" id="SSF109640">
    <property type="entry name" value="KRAB domain (Kruppel-associated box)"/>
    <property type="match status" value="1"/>
</dbReference>
<dbReference type="PROSITE" id="PS50805">
    <property type="entry name" value="KRAB"/>
    <property type="match status" value="1"/>
</dbReference>
<dbReference type="PROSITE" id="PS00028">
    <property type="entry name" value="ZINC_FINGER_C2H2_1"/>
    <property type="match status" value="11"/>
</dbReference>
<dbReference type="PROSITE" id="PS50157">
    <property type="entry name" value="ZINC_FINGER_C2H2_2"/>
    <property type="match status" value="13"/>
</dbReference>
<comment type="function">
    <text>May be involved in transcriptional regulation.</text>
</comment>
<comment type="subcellular location">
    <subcellularLocation>
        <location evidence="6">Nucleus</location>
    </subcellularLocation>
</comment>
<comment type="alternative products">
    <event type="alternative splicing"/>
    <isoform>
        <id>Q9Y2Q1-1</id>
        <name>1</name>
        <sequence type="displayed"/>
    </isoform>
    <isoform>
        <id>Q9Y2Q1-2</id>
        <name>2</name>
        <sequence type="described" ref="VSP_040860"/>
    </isoform>
    <isoform>
        <id>Q9Y2Q1-3</id>
        <name>3</name>
        <sequence type="described" ref="VSP_040858"/>
    </isoform>
    <isoform>
        <id>Q9Y2Q1-4</id>
        <name>4</name>
        <sequence type="described" ref="VSP_040859"/>
    </isoform>
</comment>
<comment type="similarity">
    <text evidence="6">Belongs to the krueppel C2H2-type zinc-finger protein family.</text>
</comment>
<sequence length="563" mass="65779">MGPLTIRDVTVEFSLEEWHCLDTAQQNLYRDVMLENYRNLVFLGIAVSKPDLITCLEQGKEPCNMKRHEMVAKPPVMCSHIAEDLCPERDIKYFFQKVILRRYDKCEHENLQLRKGCKSVDECKVCKGGYNGLNQCLITTQSKMYQCDKYVKVFYKFSNSDRHKIRHTEKKTCKCKECGKSFCMLSQLTRHKRIHIRENSHKCEECGKAFNQSSALTRHKMTHTGEKPYKCEECGKAFNRSSHLTQHKVIHTREKPYKCEECGKAFNRSSHITQHKRIHNREKPFKYDECCKAFKWSSALTTLTQHKRIHTGEKPYKCEECGKAFNQSSALTRHKMIHTGEKPFQCEECGKAFNRSSHLTQHKIIHTKEKPYKCEECGKAFNRSSHLTKHKRIHTREKAYKCDEYCKAFNWSSALTTLTQHKIIHTGEKPYKCEECGKAFNRSSYLIRHKIIHTGEKPYKCEECGKAFNQSSHLTQHKIIHTGEKPYKCEECGKAFNRSSHLSQHKIIHTGEKPYKCEECGKPFNRFSYLTVHKRIHAGENPNKYEECGKACNHSSNLTKHNS</sequence>
<gene>
    <name type="primary">ZNF257</name>
    <name type="synonym">BMZF4</name>
</gene>
<protein>
    <recommendedName>
        <fullName>Zinc finger protein 257</fullName>
    </recommendedName>
    <alternativeName>
        <fullName>Bone marrow zinc finger 4</fullName>
        <shortName>BMZF-4</shortName>
    </alternativeName>
</protein>
<keyword id="KW-0025">Alternative splicing</keyword>
<keyword id="KW-0238">DNA-binding</keyword>
<keyword id="KW-0479">Metal-binding</keyword>
<keyword id="KW-0539">Nucleus</keyword>
<keyword id="KW-1267">Proteomics identification</keyword>
<keyword id="KW-1185">Reference proteome</keyword>
<keyword id="KW-0677">Repeat</keyword>
<keyword id="KW-0804">Transcription</keyword>
<keyword id="KW-0805">Transcription regulation</keyword>
<keyword id="KW-0862">Zinc</keyword>
<keyword id="KW-0863">Zinc-finger</keyword>
<organism>
    <name type="scientific">Homo sapiens</name>
    <name type="common">Human</name>
    <dbReference type="NCBI Taxonomy" id="9606"/>
    <lineage>
        <taxon>Eukaryota</taxon>
        <taxon>Metazoa</taxon>
        <taxon>Chordata</taxon>
        <taxon>Craniata</taxon>
        <taxon>Vertebrata</taxon>
        <taxon>Euteleostomi</taxon>
        <taxon>Mammalia</taxon>
        <taxon>Eutheria</taxon>
        <taxon>Euarchontoglires</taxon>
        <taxon>Primates</taxon>
        <taxon>Haplorrhini</taxon>
        <taxon>Catarrhini</taxon>
        <taxon>Hominidae</taxon>
        <taxon>Homo</taxon>
    </lineage>
</organism>
<reference key="1">
    <citation type="journal article" date="1999" name="J. Biol. Chem.">
        <title>Molecular cloning of six novel Kruppel-like zinc finger genes from hematopoietic cells and identification of a novel transregulatory domain KRNB.</title>
        <authorList>
            <person name="Han Z.-G."/>
            <person name="Zhang Q.-H."/>
            <person name="Ye M."/>
            <person name="Kan L.-X."/>
            <person name="Gu B.-W."/>
            <person name="He K.-L."/>
            <person name="Shi S.-L."/>
            <person name="Zhou J."/>
            <person name="Fu G."/>
            <person name="Mao M."/>
            <person name="Chen S.-J."/>
            <person name="Yu L."/>
            <person name="Chen Z."/>
        </authorList>
    </citation>
    <scope>NUCLEOTIDE SEQUENCE [MRNA] (ISOFORM 2)</scope>
    <source>
        <tissue>Bone marrow</tissue>
    </source>
</reference>
<reference key="2">
    <citation type="journal article" date="2004" name="Nat. Genet.">
        <title>Complete sequencing and characterization of 21,243 full-length human cDNAs.</title>
        <authorList>
            <person name="Ota T."/>
            <person name="Suzuki Y."/>
            <person name="Nishikawa T."/>
            <person name="Otsuki T."/>
            <person name="Sugiyama T."/>
            <person name="Irie R."/>
            <person name="Wakamatsu A."/>
            <person name="Hayashi K."/>
            <person name="Sato H."/>
            <person name="Nagai K."/>
            <person name="Kimura K."/>
            <person name="Makita H."/>
            <person name="Sekine M."/>
            <person name="Obayashi M."/>
            <person name="Nishi T."/>
            <person name="Shibahara T."/>
            <person name="Tanaka T."/>
            <person name="Ishii S."/>
            <person name="Yamamoto J."/>
            <person name="Saito K."/>
            <person name="Kawai Y."/>
            <person name="Isono Y."/>
            <person name="Nakamura Y."/>
            <person name="Nagahari K."/>
            <person name="Murakami K."/>
            <person name="Yasuda T."/>
            <person name="Iwayanagi T."/>
            <person name="Wagatsuma M."/>
            <person name="Shiratori A."/>
            <person name="Sudo H."/>
            <person name="Hosoiri T."/>
            <person name="Kaku Y."/>
            <person name="Kodaira H."/>
            <person name="Kondo H."/>
            <person name="Sugawara M."/>
            <person name="Takahashi M."/>
            <person name="Kanda K."/>
            <person name="Yokoi T."/>
            <person name="Furuya T."/>
            <person name="Kikkawa E."/>
            <person name="Omura Y."/>
            <person name="Abe K."/>
            <person name="Kamihara K."/>
            <person name="Katsuta N."/>
            <person name="Sato K."/>
            <person name="Tanikawa M."/>
            <person name="Yamazaki M."/>
            <person name="Ninomiya K."/>
            <person name="Ishibashi T."/>
            <person name="Yamashita H."/>
            <person name="Murakawa K."/>
            <person name="Fujimori K."/>
            <person name="Tanai H."/>
            <person name="Kimata M."/>
            <person name="Watanabe M."/>
            <person name="Hiraoka S."/>
            <person name="Chiba Y."/>
            <person name="Ishida S."/>
            <person name="Ono Y."/>
            <person name="Takiguchi S."/>
            <person name="Watanabe S."/>
            <person name="Yosida M."/>
            <person name="Hotuta T."/>
            <person name="Kusano J."/>
            <person name="Kanehori K."/>
            <person name="Takahashi-Fujii A."/>
            <person name="Hara H."/>
            <person name="Tanase T.-O."/>
            <person name="Nomura Y."/>
            <person name="Togiya S."/>
            <person name="Komai F."/>
            <person name="Hara R."/>
            <person name="Takeuchi K."/>
            <person name="Arita M."/>
            <person name="Imose N."/>
            <person name="Musashino K."/>
            <person name="Yuuki H."/>
            <person name="Oshima A."/>
            <person name="Sasaki N."/>
            <person name="Aotsuka S."/>
            <person name="Yoshikawa Y."/>
            <person name="Matsunawa H."/>
            <person name="Ichihara T."/>
            <person name="Shiohata N."/>
            <person name="Sano S."/>
            <person name="Moriya S."/>
            <person name="Momiyama H."/>
            <person name="Satoh N."/>
            <person name="Takami S."/>
            <person name="Terashima Y."/>
            <person name="Suzuki O."/>
            <person name="Nakagawa S."/>
            <person name="Senoh A."/>
            <person name="Mizoguchi H."/>
            <person name="Goto Y."/>
            <person name="Shimizu F."/>
            <person name="Wakebe H."/>
            <person name="Hishigaki H."/>
            <person name="Watanabe T."/>
            <person name="Sugiyama A."/>
            <person name="Takemoto M."/>
            <person name="Kawakami B."/>
            <person name="Yamazaki M."/>
            <person name="Watanabe K."/>
            <person name="Kumagai A."/>
            <person name="Itakura S."/>
            <person name="Fukuzumi Y."/>
            <person name="Fujimori Y."/>
            <person name="Komiyama M."/>
            <person name="Tashiro H."/>
            <person name="Tanigami A."/>
            <person name="Fujiwara T."/>
            <person name="Ono T."/>
            <person name="Yamada K."/>
            <person name="Fujii Y."/>
            <person name="Ozaki K."/>
            <person name="Hirao M."/>
            <person name="Ohmori Y."/>
            <person name="Kawabata A."/>
            <person name="Hikiji T."/>
            <person name="Kobatake N."/>
            <person name="Inagaki H."/>
            <person name="Ikema Y."/>
            <person name="Okamoto S."/>
            <person name="Okitani R."/>
            <person name="Kawakami T."/>
            <person name="Noguchi S."/>
            <person name="Itoh T."/>
            <person name="Shigeta K."/>
            <person name="Senba T."/>
            <person name="Matsumura K."/>
            <person name="Nakajima Y."/>
            <person name="Mizuno T."/>
            <person name="Morinaga M."/>
            <person name="Sasaki M."/>
            <person name="Togashi T."/>
            <person name="Oyama M."/>
            <person name="Hata H."/>
            <person name="Watanabe M."/>
            <person name="Komatsu T."/>
            <person name="Mizushima-Sugano J."/>
            <person name="Satoh T."/>
            <person name="Shirai Y."/>
            <person name="Takahashi Y."/>
            <person name="Nakagawa K."/>
            <person name="Okumura K."/>
            <person name="Nagase T."/>
            <person name="Nomura N."/>
            <person name="Kikuchi H."/>
            <person name="Masuho Y."/>
            <person name="Yamashita R."/>
            <person name="Nakai K."/>
            <person name="Yada T."/>
            <person name="Nakamura Y."/>
            <person name="Ohara O."/>
            <person name="Isogai T."/>
            <person name="Sugano S."/>
        </authorList>
    </citation>
    <scope>NUCLEOTIDE SEQUENCE [LARGE SCALE MRNA] (ISOFORM 4)</scope>
</reference>
<reference key="3">
    <citation type="journal article" date="2004" name="Nature">
        <title>The DNA sequence and biology of human chromosome 19.</title>
        <authorList>
            <person name="Grimwood J."/>
            <person name="Gordon L.A."/>
            <person name="Olsen A.S."/>
            <person name="Terry A."/>
            <person name="Schmutz J."/>
            <person name="Lamerdin J.E."/>
            <person name="Hellsten U."/>
            <person name="Goodstein D."/>
            <person name="Couronne O."/>
            <person name="Tran-Gyamfi M."/>
            <person name="Aerts A."/>
            <person name="Altherr M."/>
            <person name="Ashworth L."/>
            <person name="Bajorek E."/>
            <person name="Black S."/>
            <person name="Branscomb E."/>
            <person name="Caenepeel S."/>
            <person name="Carrano A.V."/>
            <person name="Caoile C."/>
            <person name="Chan Y.M."/>
            <person name="Christensen M."/>
            <person name="Cleland C.A."/>
            <person name="Copeland A."/>
            <person name="Dalin E."/>
            <person name="Dehal P."/>
            <person name="Denys M."/>
            <person name="Detter J.C."/>
            <person name="Escobar J."/>
            <person name="Flowers D."/>
            <person name="Fotopulos D."/>
            <person name="Garcia C."/>
            <person name="Georgescu A.M."/>
            <person name="Glavina T."/>
            <person name="Gomez M."/>
            <person name="Gonzales E."/>
            <person name="Groza M."/>
            <person name="Hammon N."/>
            <person name="Hawkins T."/>
            <person name="Haydu L."/>
            <person name="Ho I."/>
            <person name="Huang W."/>
            <person name="Israni S."/>
            <person name="Jett J."/>
            <person name="Kadner K."/>
            <person name="Kimball H."/>
            <person name="Kobayashi A."/>
            <person name="Larionov V."/>
            <person name="Leem S.-H."/>
            <person name="Lopez F."/>
            <person name="Lou Y."/>
            <person name="Lowry S."/>
            <person name="Malfatti S."/>
            <person name="Martinez D."/>
            <person name="McCready P.M."/>
            <person name="Medina C."/>
            <person name="Morgan J."/>
            <person name="Nelson K."/>
            <person name="Nolan M."/>
            <person name="Ovcharenko I."/>
            <person name="Pitluck S."/>
            <person name="Pollard M."/>
            <person name="Popkie A.P."/>
            <person name="Predki P."/>
            <person name="Quan G."/>
            <person name="Ramirez L."/>
            <person name="Rash S."/>
            <person name="Retterer J."/>
            <person name="Rodriguez A."/>
            <person name="Rogers S."/>
            <person name="Salamov A."/>
            <person name="Salazar A."/>
            <person name="She X."/>
            <person name="Smith D."/>
            <person name="Slezak T."/>
            <person name="Solovyev V."/>
            <person name="Thayer N."/>
            <person name="Tice H."/>
            <person name="Tsai M."/>
            <person name="Ustaszewska A."/>
            <person name="Vo N."/>
            <person name="Wagner M."/>
            <person name="Wheeler J."/>
            <person name="Wu K."/>
            <person name="Xie G."/>
            <person name="Yang J."/>
            <person name="Dubchak I."/>
            <person name="Furey T.S."/>
            <person name="DeJong P."/>
            <person name="Dickson M."/>
            <person name="Gordon D."/>
            <person name="Eichler E.E."/>
            <person name="Pennacchio L.A."/>
            <person name="Richardson P."/>
            <person name="Stubbs L."/>
            <person name="Rokhsar D.S."/>
            <person name="Myers R.M."/>
            <person name="Rubin E.M."/>
            <person name="Lucas S.M."/>
        </authorList>
    </citation>
    <scope>NUCLEOTIDE SEQUENCE [LARGE SCALE GENOMIC DNA]</scope>
</reference>
<reference key="4">
    <citation type="journal article" date="2004" name="Genome Res.">
        <title>The status, quality, and expansion of the NIH full-length cDNA project: the Mammalian Gene Collection (MGC).</title>
        <authorList>
            <consortium name="The MGC Project Team"/>
        </authorList>
    </citation>
    <scope>NUCLEOTIDE SEQUENCE [LARGE SCALE MRNA] (ISOFORM 3)</scope>
    <source>
        <tissue>Testis</tissue>
    </source>
</reference>
<proteinExistence type="evidence at protein level"/>
<accession>Q9Y2Q1</accession>
<accession>B3KPS4</accession>
<accession>E9PG34</accession>
<accession>Q8NE34</accession>
<evidence type="ECO:0000255" key="1">
    <source>
        <dbReference type="PROSITE-ProRule" id="PRU00042"/>
    </source>
</evidence>
<evidence type="ECO:0000255" key="2">
    <source>
        <dbReference type="PROSITE-ProRule" id="PRU00119"/>
    </source>
</evidence>
<evidence type="ECO:0000303" key="3">
    <source>
    </source>
</evidence>
<evidence type="ECO:0000303" key="4">
    <source>
    </source>
</evidence>
<evidence type="ECO:0000303" key="5">
    <source>
    </source>
</evidence>
<evidence type="ECO:0000305" key="6"/>
<name>ZN257_HUMAN</name>